<protein>
    <recommendedName>
        <fullName evidence="1">Peptidyl-tRNA hydrolase</fullName>
        <shortName evidence="1">Pth</shortName>
        <ecNumber evidence="1">3.1.1.29</ecNumber>
    </recommendedName>
</protein>
<evidence type="ECO:0000255" key="1">
    <source>
        <dbReference type="HAMAP-Rule" id="MF_00083"/>
    </source>
</evidence>
<proteinExistence type="inferred from homology"/>
<gene>
    <name evidence="1" type="primary">pth</name>
    <name type="ordered locus">spr0005</name>
</gene>
<organism>
    <name type="scientific">Streptococcus pneumoniae (strain ATCC BAA-255 / R6)</name>
    <dbReference type="NCBI Taxonomy" id="171101"/>
    <lineage>
        <taxon>Bacteria</taxon>
        <taxon>Bacillati</taxon>
        <taxon>Bacillota</taxon>
        <taxon>Bacilli</taxon>
        <taxon>Lactobacillales</taxon>
        <taxon>Streptococcaceae</taxon>
        <taxon>Streptococcus</taxon>
    </lineage>
</organism>
<feature type="chain" id="PRO_0000187829" description="Peptidyl-tRNA hydrolase">
    <location>
        <begin position="1"/>
        <end position="189"/>
    </location>
</feature>
<feature type="active site" description="Proton acceptor" evidence="1">
    <location>
        <position position="20"/>
    </location>
</feature>
<feature type="binding site" evidence="1">
    <location>
        <position position="15"/>
    </location>
    <ligand>
        <name>tRNA</name>
        <dbReference type="ChEBI" id="CHEBI:17843"/>
    </ligand>
</feature>
<feature type="binding site" evidence="1">
    <location>
        <position position="66"/>
    </location>
    <ligand>
        <name>tRNA</name>
        <dbReference type="ChEBI" id="CHEBI:17843"/>
    </ligand>
</feature>
<feature type="binding site" evidence="1">
    <location>
        <position position="68"/>
    </location>
    <ligand>
        <name>tRNA</name>
        <dbReference type="ChEBI" id="CHEBI:17843"/>
    </ligand>
</feature>
<feature type="binding site" evidence="1">
    <location>
        <position position="114"/>
    </location>
    <ligand>
        <name>tRNA</name>
        <dbReference type="ChEBI" id="CHEBI:17843"/>
    </ligand>
</feature>
<feature type="site" description="Discriminates between blocked and unblocked aminoacyl-tRNA" evidence="1">
    <location>
        <position position="10"/>
    </location>
</feature>
<feature type="site" description="Stabilizes the basic form of H active site to accept a proton" evidence="1">
    <location>
        <position position="93"/>
    </location>
</feature>
<dbReference type="EC" id="3.1.1.29" evidence="1"/>
<dbReference type="EMBL" id="AE007317">
    <property type="protein sequence ID" value="AAK98809.1"/>
    <property type="molecule type" value="Genomic_DNA"/>
</dbReference>
<dbReference type="PIR" id="E97872">
    <property type="entry name" value="E97872"/>
</dbReference>
<dbReference type="RefSeq" id="NP_357599.1">
    <property type="nucleotide sequence ID" value="NC_003098.1"/>
</dbReference>
<dbReference type="RefSeq" id="WP_000163929.1">
    <property type="nucleotide sequence ID" value="NC_003098.1"/>
</dbReference>
<dbReference type="SMR" id="Q8DRQ2"/>
<dbReference type="STRING" id="171101.spr0005"/>
<dbReference type="KEGG" id="spr:spr0005"/>
<dbReference type="PATRIC" id="fig|171101.6.peg.5"/>
<dbReference type="eggNOG" id="COG0193">
    <property type="taxonomic scope" value="Bacteria"/>
</dbReference>
<dbReference type="HOGENOM" id="CLU_062456_4_1_9"/>
<dbReference type="Proteomes" id="UP000000586">
    <property type="component" value="Chromosome"/>
</dbReference>
<dbReference type="GO" id="GO:0005737">
    <property type="term" value="C:cytoplasm"/>
    <property type="evidence" value="ECO:0007669"/>
    <property type="project" value="UniProtKB-SubCell"/>
</dbReference>
<dbReference type="GO" id="GO:0004045">
    <property type="term" value="F:peptidyl-tRNA hydrolase activity"/>
    <property type="evidence" value="ECO:0000318"/>
    <property type="project" value="GO_Central"/>
</dbReference>
<dbReference type="GO" id="GO:0000049">
    <property type="term" value="F:tRNA binding"/>
    <property type="evidence" value="ECO:0007669"/>
    <property type="project" value="UniProtKB-UniRule"/>
</dbReference>
<dbReference type="GO" id="GO:0006515">
    <property type="term" value="P:protein quality control for misfolded or incompletely synthesized proteins"/>
    <property type="evidence" value="ECO:0007669"/>
    <property type="project" value="UniProtKB-UniRule"/>
</dbReference>
<dbReference type="GO" id="GO:0072344">
    <property type="term" value="P:rescue of stalled ribosome"/>
    <property type="evidence" value="ECO:0007669"/>
    <property type="project" value="UniProtKB-UniRule"/>
</dbReference>
<dbReference type="CDD" id="cd00462">
    <property type="entry name" value="PTH"/>
    <property type="match status" value="1"/>
</dbReference>
<dbReference type="FunFam" id="3.40.50.1470:FF:000001">
    <property type="entry name" value="Peptidyl-tRNA hydrolase"/>
    <property type="match status" value="1"/>
</dbReference>
<dbReference type="Gene3D" id="3.40.50.1470">
    <property type="entry name" value="Peptidyl-tRNA hydrolase"/>
    <property type="match status" value="1"/>
</dbReference>
<dbReference type="HAMAP" id="MF_00083">
    <property type="entry name" value="Pept_tRNA_hydro_bact"/>
    <property type="match status" value="1"/>
</dbReference>
<dbReference type="InterPro" id="IPR001328">
    <property type="entry name" value="Pept_tRNA_hydro"/>
</dbReference>
<dbReference type="InterPro" id="IPR018171">
    <property type="entry name" value="Pept_tRNA_hydro_CS"/>
</dbReference>
<dbReference type="InterPro" id="IPR036416">
    <property type="entry name" value="Pept_tRNA_hydro_sf"/>
</dbReference>
<dbReference type="NCBIfam" id="TIGR00447">
    <property type="entry name" value="pth"/>
    <property type="match status" value="1"/>
</dbReference>
<dbReference type="PANTHER" id="PTHR17224">
    <property type="entry name" value="PEPTIDYL-TRNA HYDROLASE"/>
    <property type="match status" value="1"/>
</dbReference>
<dbReference type="PANTHER" id="PTHR17224:SF1">
    <property type="entry name" value="PEPTIDYL-TRNA HYDROLASE"/>
    <property type="match status" value="1"/>
</dbReference>
<dbReference type="Pfam" id="PF01195">
    <property type="entry name" value="Pept_tRNA_hydro"/>
    <property type="match status" value="1"/>
</dbReference>
<dbReference type="SUPFAM" id="SSF53178">
    <property type="entry name" value="Peptidyl-tRNA hydrolase-like"/>
    <property type="match status" value="1"/>
</dbReference>
<dbReference type="PROSITE" id="PS01195">
    <property type="entry name" value="PEPT_TRNA_HYDROL_1"/>
    <property type="match status" value="1"/>
</dbReference>
<dbReference type="PROSITE" id="PS01196">
    <property type="entry name" value="PEPT_TRNA_HYDROL_2"/>
    <property type="match status" value="1"/>
</dbReference>
<sequence>MTKLLVGLGNPGDKYFETKHNVGFMLIDQLAKKQNVTFTHDKIFQADLASFFLNGEKIYLVKPTTFMNESGKAVHALLTYYGLDIDDLLIIYDDLDMEVGKIRLRAKGSAGGHNGIKSIIQHIGTQVFNRVKIGIGRPKNGMSVVHHVLSKFDRDDYIGILQSIDKVDDSVNYYLQEKKFEKTMQRYNG</sequence>
<accession>Q8DRQ2</accession>
<reference key="1">
    <citation type="journal article" date="2001" name="J. Bacteriol.">
        <title>Genome of the bacterium Streptococcus pneumoniae strain R6.</title>
        <authorList>
            <person name="Hoskins J."/>
            <person name="Alborn W.E. Jr."/>
            <person name="Arnold J."/>
            <person name="Blaszczak L.C."/>
            <person name="Burgett S."/>
            <person name="DeHoff B.S."/>
            <person name="Estrem S.T."/>
            <person name="Fritz L."/>
            <person name="Fu D.-J."/>
            <person name="Fuller W."/>
            <person name="Geringer C."/>
            <person name="Gilmour R."/>
            <person name="Glass J.S."/>
            <person name="Khoja H."/>
            <person name="Kraft A.R."/>
            <person name="Lagace R.E."/>
            <person name="LeBlanc D.J."/>
            <person name="Lee L.N."/>
            <person name="Lefkowitz E.J."/>
            <person name="Lu J."/>
            <person name="Matsushima P."/>
            <person name="McAhren S.M."/>
            <person name="McHenney M."/>
            <person name="McLeaster K."/>
            <person name="Mundy C.W."/>
            <person name="Nicas T.I."/>
            <person name="Norris F.H."/>
            <person name="O'Gara M."/>
            <person name="Peery R.B."/>
            <person name="Robertson G.T."/>
            <person name="Rockey P."/>
            <person name="Sun P.-M."/>
            <person name="Winkler M.E."/>
            <person name="Yang Y."/>
            <person name="Young-Bellido M."/>
            <person name="Zhao G."/>
            <person name="Zook C.A."/>
            <person name="Baltz R.H."/>
            <person name="Jaskunas S.R."/>
            <person name="Rosteck P.R. Jr."/>
            <person name="Skatrud P.L."/>
            <person name="Glass J.I."/>
        </authorList>
    </citation>
    <scope>NUCLEOTIDE SEQUENCE [LARGE SCALE GENOMIC DNA]</scope>
    <source>
        <strain>ATCC BAA-255 / R6</strain>
    </source>
</reference>
<keyword id="KW-0963">Cytoplasm</keyword>
<keyword id="KW-0378">Hydrolase</keyword>
<keyword id="KW-1185">Reference proteome</keyword>
<keyword id="KW-0694">RNA-binding</keyword>
<keyword id="KW-0820">tRNA-binding</keyword>
<name>PTH_STRR6</name>
<comment type="function">
    <text evidence="1">Hydrolyzes ribosome-free peptidyl-tRNAs (with 1 or more amino acids incorporated), which drop off the ribosome during protein synthesis, or as a result of ribosome stalling.</text>
</comment>
<comment type="function">
    <text evidence="1">Catalyzes the release of premature peptidyl moieties from peptidyl-tRNA molecules trapped in stalled 50S ribosomal subunits, and thus maintains levels of free tRNAs and 50S ribosomes.</text>
</comment>
<comment type="catalytic activity">
    <reaction evidence="1">
        <text>an N-acyl-L-alpha-aminoacyl-tRNA + H2O = an N-acyl-L-amino acid + a tRNA + H(+)</text>
        <dbReference type="Rhea" id="RHEA:54448"/>
        <dbReference type="Rhea" id="RHEA-COMP:10123"/>
        <dbReference type="Rhea" id="RHEA-COMP:13883"/>
        <dbReference type="ChEBI" id="CHEBI:15377"/>
        <dbReference type="ChEBI" id="CHEBI:15378"/>
        <dbReference type="ChEBI" id="CHEBI:59874"/>
        <dbReference type="ChEBI" id="CHEBI:78442"/>
        <dbReference type="ChEBI" id="CHEBI:138191"/>
        <dbReference type="EC" id="3.1.1.29"/>
    </reaction>
</comment>
<comment type="subunit">
    <text evidence="1">Monomer.</text>
</comment>
<comment type="subcellular location">
    <subcellularLocation>
        <location evidence="1">Cytoplasm</location>
    </subcellularLocation>
</comment>
<comment type="similarity">
    <text evidence="1">Belongs to the PTH family.</text>
</comment>